<organism>
    <name type="scientific">Pseudomonas aeruginosa (strain ATCC 15692 / DSM 22644 / CIP 104116 / JCM 14847 / LMG 12228 / 1C / PRS 101 / PAO1)</name>
    <dbReference type="NCBI Taxonomy" id="208964"/>
    <lineage>
        <taxon>Bacteria</taxon>
        <taxon>Pseudomonadati</taxon>
        <taxon>Pseudomonadota</taxon>
        <taxon>Gammaproteobacteria</taxon>
        <taxon>Pseudomonadales</taxon>
        <taxon>Pseudomonadaceae</taxon>
        <taxon>Pseudomonas</taxon>
    </lineage>
</organism>
<evidence type="ECO:0000255" key="1">
    <source>
        <dbReference type="HAMAP-Rule" id="MF_01398"/>
    </source>
</evidence>
<keyword id="KW-0066">ATP synthesis</keyword>
<keyword id="KW-0997">Cell inner membrane</keyword>
<keyword id="KW-1003">Cell membrane</keyword>
<keyword id="KW-0138">CF(0)</keyword>
<keyword id="KW-0375">Hydrogen ion transport</keyword>
<keyword id="KW-0406">Ion transport</keyword>
<keyword id="KW-0472">Membrane</keyword>
<keyword id="KW-1185">Reference proteome</keyword>
<keyword id="KW-0812">Transmembrane</keyword>
<keyword id="KW-1133">Transmembrane helix</keyword>
<keyword id="KW-0813">Transport</keyword>
<comment type="function">
    <text evidence="1">F(1)F(0) ATP synthase produces ATP from ADP in the presence of a proton or sodium gradient. F-type ATPases consist of two structural domains, F(1) containing the extramembraneous catalytic core and F(0) containing the membrane proton channel, linked together by a central stalk and a peripheral stalk. During catalysis, ATP synthesis in the catalytic domain of F(1) is coupled via a rotary mechanism of the central stalk subunits to proton translocation.</text>
</comment>
<comment type="function">
    <text evidence="1">Component of the F(0) channel, it forms part of the peripheral stalk, linking F(1) to F(0).</text>
</comment>
<comment type="subunit">
    <text evidence="1">F-type ATPases have 2 components, F(1) - the catalytic core - and F(0) - the membrane proton channel. F(1) has five subunits: alpha(3), beta(3), gamma(1), delta(1), epsilon(1). F(0) has three main subunits: a(1), b(2) and c(10-14). The alpha and beta chains form an alternating ring which encloses part of the gamma chain. F(1) is attached to F(0) by a central stalk formed by the gamma and epsilon chains, while a peripheral stalk is formed by the delta and b chains.</text>
</comment>
<comment type="subcellular location">
    <subcellularLocation>
        <location evidence="1">Cell inner membrane</location>
        <topology evidence="1">Single-pass membrane protein</topology>
    </subcellularLocation>
</comment>
<comment type="similarity">
    <text evidence="1">Belongs to the ATPase B chain family.</text>
</comment>
<dbReference type="EMBL" id="AE004091">
    <property type="protein sequence ID" value="AAG08943.1"/>
    <property type="molecule type" value="Genomic_DNA"/>
</dbReference>
<dbReference type="PIR" id="G82952">
    <property type="entry name" value="G82952"/>
</dbReference>
<dbReference type="RefSeq" id="NP_254245.1">
    <property type="nucleotide sequence ID" value="NC_002516.2"/>
</dbReference>
<dbReference type="RefSeq" id="WP_003100235.1">
    <property type="nucleotide sequence ID" value="NZ_QZGE01000012.1"/>
</dbReference>
<dbReference type="SMR" id="Q9HT16"/>
<dbReference type="FunCoup" id="Q9HT16">
    <property type="interactions" value="217"/>
</dbReference>
<dbReference type="STRING" id="208964.PA5558"/>
<dbReference type="PaxDb" id="208964-PA5558"/>
<dbReference type="DNASU" id="878510"/>
<dbReference type="GeneID" id="878510"/>
<dbReference type="KEGG" id="pae:PA5558"/>
<dbReference type="PATRIC" id="fig|208964.12.peg.5824"/>
<dbReference type="PseudoCAP" id="PA5558"/>
<dbReference type="HOGENOM" id="CLU_079215_4_5_6"/>
<dbReference type="InParanoid" id="Q9HT16"/>
<dbReference type="OrthoDB" id="9788020at2"/>
<dbReference type="PhylomeDB" id="Q9HT16"/>
<dbReference type="BioCyc" id="PAER208964:G1FZ6-5685-MONOMER"/>
<dbReference type="Proteomes" id="UP000002438">
    <property type="component" value="Chromosome"/>
</dbReference>
<dbReference type="GO" id="GO:0005886">
    <property type="term" value="C:plasma membrane"/>
    <property type="evidence" value="ECO:0007669"/>
    <property type="project" value="UniProtKB-SubCell"/>
</dbReference>
<dbReference type="GO" id="GO:0045259">
    <property type="term" value="C:proton-transporting ATP synthase complex"/>
    <property type="evidence" value="ECO:0007669"/>
    <property type="project" value="UniProtKB-KW"/>
</dbReference>
<dbReference type="GO" id="GO:0046933">
    <property type="term" value="F:proton-transporting ATP synthase activity, rotational mechanism"/>
    <property type="evidence" value="ECO:0007669"/>
    <property type="project" value="UniProtKB-UniRule"/>
</dbReference>
<dbReference type="CDD" id="cd06503">
    <property type="entry name" value="ATP-synt_Fo_b"/>
    <property type="match status" value="1"/>
</dbReference>
<dbReference type="FunFam" id="1.20.5.620:FF:000001">
    <property type="entry name" value="ATP synthase subunit b"/>
    <property type="match status" value="1"/>
</dbReference>
<dbReference type="Gene3D" id="1.20.5.620">
    <property type="entry name" value="F1F0 ATP synthase subunit B, membrane domain"/>
    <property type="match status" value="1"/>
</dbReference>
<dbReference type="HAMAP" id="MF_01398">
    <property type="entry name" value="ATP_synth_b_bprime"/>
    <property type="match status" value="1"/>
</dbReference>
<dbReference type="InterPro" id="IPR028987">
    <property type="entry name" value="ATP_synth_B-like_membr_sf"/>
</dbReference>
<dbReference type="InterPro" id="IPR002146">
    <property type="entry name" value="ATP_synth_b/b'su_bac/chlpt"/>
</dbReference>
<dbReference type="InterPro" id="IPR005864">
    <property type="entry name" value="ATP_synth_F0_bsu_bac"/>
</dbReference>
<dbReference type="InterPro" id="IPR050059">
    <property type="entry name" value="ATP_synthase_B_chain"/>
</dbReference>
<dbReference type="NCBIfam" id="TIGR01144">
    <property type="entry name" value="ATP_synt_b"/>
    <property type="match status" value="1"/>
</dbReference>
<dbReference type="NCBIfam" id="NF004411">
    <property type="entry name" value="PRK05759.1-2"/>
    <property type="match status" value="1"/>
</dbReference>
<dbReference type="NCBIfam" id="NF004413">
    <property type="entry name" value="PRK05759.1-4"/>
    <property type="match status" value="1"/>
</dbReference>
<dbReference type="PANTHER" id="PTHR33445:SF1">
    <property type="entry name" value="ATP SYNTHASE SUBUNIT B"/>
    <property type="match status" value="1"/>
</dbReference>
<dbReference type="PANTHER" id="PTHR33445">
    <property type="entry name" value="ATP SYNTHASE SUBUNIT B', CHLOROPLASTIC"/>
    <property type="match status" value="1"/>
</dbReference>
<dbReference type="Pfam" id="PF00430">
    <property type="entry name" value="ATP-synt_B"/>
    <property type="match status" value="1"/>
</dbReference>
<dbReference type="SUPFAM" id="SSF81573">
    <property type="entry name" value="F1F0 ATP synthase subunit B, membrane domain"/>
    <property type="match status" value="1"/>
</dbReference>
<protein>
    <recommendedName>
        <fullName evidence="1">ATP synthase subunit b</fullName>
    </recommendedName>
    <alternativeName>
        <fullName evidence="1">ATP synthase F(0) sector subunit b</fullName>
    </alternativeName>
    <alternativeName>
        <fullName evidence="1">ATPase subunit I</fullName>
    </alternativeName>
    <alternativeName>
        <fullName evidence="1">F-type ATPase subunit b</fullName>
        <shortName evidence="1">F-ATPase subunit b</shortName>
    </alternativeName>
</protein>
<name>ATPF_PSEAE</name>
<accession>Q9HT16</accession>
<gene>
    <name evidence="1" type="primary">atpF</name>
    <name type="ordered locus">PA5558</name>
</gene>
<feature type="chain" id="PRO_0000287749" description="ATP synthase subunit b">
    <location>
        <begin position="1"/>
        <end position="156"/>
    </location>
</feature>
<feature type="transmembrane region" description="Helical" evidence="1">
    <location>
        <begin position="12"/>
        <end position="32"/>
    </location>
</feature>
<reference key="1">
    <citation type="journal article" date="2000" name="Nature">
        <title>Complete genome sequence of Pseudomonas aeruginosa PAO1, an opportunistic pathogen.</title>
        <authorList>
            <person name="Stover C.K."/>
            <person name="Pham X.-Q.T."/>
            <person name="Erwin A.L."/>
            <person name="Mizoguchi S.D."/>
            <person name="Warrener P."/>
            <person name="Hickey M.J."/>
            <person name="Brinkman F.S.L."/>
            <person name="Hufnagle W.O."/>
            <person name="Kowalik D.J."/>
            <person name="Lagrou M."/>
            <person name="Garber R.L."/>
            <person name="Goltry L."/>
            <person name="Tolentino E."/>
            <person name="Westbrock-Wadman S."/>
            <person name="Yuan Y."/>
            <person name="Brody L.L."/>
            <person name="Coulter S.N."/>
            <person name="Folger K.R."/>
            <person name="Kas A."/>
            <person name="Larbig K."/>
            <person name="Lim R.M."/>
            <person name="Smith K.A."/>
            <person name="Spencer D.H."/>
            <person name="Wong G.K.-S."/>
            <person name="Wu Z."/>
            <person name="Paulsen I.T."/>
            <person name="Reizer J."/>
            <person name="Saier M.H. Jr."/>
            <person name="Hancock R.E.W."/>
            <person name="Lory S."/>
            <person name="Olson M.V."/>
        </authorList>
    </citation>
    <scope>NUCLEOTIDE SEQUENCE [LARGE SCALE GENOMIC DNA]</scope>
    <source>
        <strain>ATCC 15692 / DSM 22644 / CIP 104116 / JCM 14847 / LMG 12228 / 1C / PRS 101 / PAO1</strain>
    </source>
</reference>
<sequence>MNINATLIGQSVAFFIFVLFCMKFVWPPVIAALQERQKKIADGLDAANRAARDLELAHEKAGQQLREAKAQAAEIVEQAKKRANQIVDEARDQARTEGERLKAQAQAEIEQELNSVKDALRAQVGALAVTGAEKILGASIDANAHEQLVSKLAAEI</sequence>
<proteinExistence type="inferred from homology"/>